<gene>
    <name evidence="1" type="primary">murB</name>
    <name type="ordered locus">Mpop_3127</name>
</gene>
<keyword id="KW-0131">Cell cycle</keyword>
<keyword id="KW-0132">Cell division</keyword>
<keyword id="KW-0133">Cell shape</keyword>
<keyword id="KW-0961">Cell wall biogenesis/degradation</keyword>
<keyword id="KW-0963">Cytoplasm</keyword>
<keyword id="KW-0274">FAD</keyword>
<keyword id="KW-0285">Flavoprotein</keyword>
<keyword id="KW-0521">NADP</keyword>
<keyword id="KW-0560">Oxidoreductase</keyword>
<keyword id="KW-0573">Peptidoglycan synthesis</keyword>
<feature type="chain" id="PRO_1000191432" description="UDP-N-acetylenolpyruvoylglucosamine reductase">
    <location>
        <begin position="1"/>
        <end position="309"/>
    </location>
</feature>
<feature type="domain" description="FAD-binding PCMH-type" evidence="1">
    <location>
        <begin position="34"/>
        <end position="221"/>
    </location>
</feature>
<feature type="active site" evidence="1">
    <location>
        <position position="179"/>
    </location>
</feature>
<feature type="active site" description="Proton donor" evidence="1">
    <location>
        <position position="228"/>
    </location>
</feature>
<feature type="active site" evidence="1">
    <location>
        <position position="298"/>
    </location>
</feature>
<proteinExistence type="inferred from homology"/>
<name>MURB_METPB</name>
<comment type="function">
    <text evidence="1">Cell wall formation.</text>
</comment>
<comment type="catalytic activity">
    <reaction evidence="1">
        <text>UDP-N-acetyl-alpha-D-muramate + NADP(+) = UDP-N-acetyl-3-O-(1-carboxyvinyl)-alpha-D-glucosamine + NADPH + H(+)</text>
        <dbReference type="Rhea" id="RHEA:12248"/>
        <dbReference type="ChEBI" id="CHEBI:15378"/>
        <dbReference type="ChEBI" id="CHEBI:57783"/>
        <dbReference type="ChEBI" id="CHEBI:58349"/>
        <dbReference type="ChEBI" id="CHEBI:68483"/>
        <dbReference type="ChEBI" id="CHEBI:70757"/>
        <dbReference type="EC" id="1.3.1.98"/>
    </reaction>
</comment>
<comment type="cofactor">
    <cofactor evidence="1">
        <name>FAD</name>
        <dbReference type="ChEBI" id="CHEBI:57692"/>
    </cofactor>
</comment>
<comment type="pathway">
    <text evidence="1">Cell wall biogenesis; peptidoglycan biosynthesis.</text>
</comment>
<comment type="subcellular location">
    <subcellularLocation>
        <location evidence="1">Cytoplasm</location>
    </subcellularLocation>
</comment>
<comment type="similarity">
    <text evidence="1">Belongs to the MurB family.</text>
</comment>
<dbReference type="EC" id="1.3.1.98" evidence="1"/>
<dbReference type="EMBL" id="CP001029">
    <property type="protein sequence ID" value="ACB81279.1"/>
    <property type="molecule type" value="Genomic_DNA"/>
</dbReference>
<dbReference type="RefSeq" id="WP_012454997.1">
    <property type="nucleotide sequence ID" value="NC_010725.1"/>
</dbReference>
<dbReference type="SMR" id="B1ZGP6"/>
<dbReference type="STRING" id="441620.Mpop_3127"/>
<dbReference type="KEGG" id="mpo:Mpop_3127"/>
<dbReference type="eggNOG" id="COG0812">
    <property type="taxonomic scope" value="Bacteria"/>
</dbReference>
<dbReference type="HOGENOM" id="CLU_035304_1_0_5"/>
<dbReference type="OrthoDB" id="9804753at2"/>
<dbReference type="UniPathway" id="UPA00219"/>
<dbReference type="Proteomes" id="UP000007136">
    <property type="component" value="Chromosome"/>
</dbReference>
<dbReference type="GO" id="GO:0005829">
    <property type="term" value="C:cytosol"/>
    <property type="evidence" value="ECO:0007669"/>
    <property type="project" value="TreeGrafter"/>
</dbReference>
<dbReference type="GO" id="GO:0071949">
    <property type="term" value="F:FAD binding"/>
    <property type="evidence" value="ECO:0007669"/>
    <property type="project" value="InterPro"/>
</dbReference>
<dbReference type="GO" id="GO:0008762">
    <property type="term" value="F:UDP-N-acetylmuramate dehydrogenase activity"/>
    <property type="evidence" value="ECO:0007669"/>
    <property type="project" value="UniProtKB-UniRule"/>
</dbReference>
<dbReference type="GO" id="GO:0051301">
    <property type="term" value="P:cell division"/>
    <property type="evidence" value="ECO:0007669"/>
    <property type="project" value="UniProtKB-KW"/>
</dbReference>
<dbReference type="GO" id="GO:0071555">
    <property type="term" value="P:cell wall organization"/>
    <property type="evidence" value="ECO:0007669"/>
    <property type="project" value="UniProtKB-KW"/>
</dbReference>
<dbReference type="GO" id="GO:0009252">
    <property type="term" value="P:peptidoglycan biosynthetic process"/>
    <property type="evidence" value="ECO:0007669"/>
    <property type="project" value="UniProtKB-UniRule"/>
</dbReference>
<dbReference type="GO" id="GO:0008360">
    <property type="term" value="P:regulation of cell shape"/>
    <property type="evidence" value="ECO:0007669"/>
    <property type="project" value="UniProtKB-KW"/>
</dbReference>
<dbReference type="Gene3D" id="3.30.465.10">
    <property type="match status" value="1"/>
</dbReference>
<dbReference type="Gene3D" id="3.90.78.10">
    <property type="entry name" value="UDP-N-acetylenolpyruvoylglucosamine reductase, C-terminal domain"/>
    <property type="match status" value="1"/>
</dbReference>
<dbReference type="Gene3D" id="3.30.43.10">
    <property type="entry name" value="Uridine Diphospho-n-acetylenolpyruvylglucosamine Reductase, domain 2"/>
    <property type="match status" value="1"/>
</dbReference>
<dbReference type="HAMAP" id="MF_00037">
    <property type="entry name" value="MurB"/>
    <property type="match status" value="1"/>
</dbReference>
<dbReference type="InterPro" id="IPR016166">
    <property type="entry name" value="FAD-bd_PCMH"/>
</dbReference>
<dbReference type="InterPro" id="IPR036318">
    <property type="entry name" value="FAD-bd_PCMH-like_sf"/>
</dbReference>
<dbReference type="InterPro" id="IPR016167">
    <property type="entry name" value="FAD-bd_PCMH_sub1"/>
</dbReference>
<dbReference type="InterPro" id="IPR016169">
    <property type="entry name" value="FAD-bd_PCMH_sub2"/>
</dbReference>
<dbReference type="InterPro" id="IPR003170">
    <property type="entry name" value="MurB"/>
</dbReference>
<dbReference type="InterPro" id="IPR011601">
    <property type="entry name" value="MurB_C"/>
</dbReference>
<dbReference type="InterPro" id="IPR036635">
    <property type="entry name" value="MurB_C_sf"/>
</dbReference>
<dbReference type="InterPro" id="IPR006094">
    <property type="entry name" value="Oxid_FAD_bind_N"/>
</dbReference>
<dbReference type="NCBIfam" id="TIGR00179">
    <property type="entry name" value="murB"/>
    <property type="match status" value="1"/>
</dbReference>
<dbReference type="NCBIfam" id="NF010480">
    <property type="entry name" value="PRK13905.1"/>
    <property type="match status" value="1"/>
</dbReference>
<dbReference type="PANTHER" id="PTHR21071">
    <property type="entry name" value="UDP-N-ACETYLENOLPYRUVOYLGLUCOSAMINE REDUCTASE"/>
    <property type="match status" value="1"/>
</dbReference>
<dbReference type="PANTHER" id="PTHR21071:SF4">
    <property type="entry name" value="UDP-N-ACETYLENOLPYRUVOYLGLUCOSAMINE REDUCTASE"/>
    <property type="match status" value="1"/>
</dbReference>
<dbReference type="Pfam" id="PF01565">
    <property type="entry name" value="FAD_binding_4"/>
    <property type="match status" value="1"/>
</dbReference>
<dbReference type="Pfam" id="PF02873">
    <property type="entry name" value="MurB_C"/>
    <property type="match status" value="1"/>
</dbReference>
<dbReference type="SUPFAM" id="SSF56176">
    <property type="entry name" value="FAD-binding/transporter-associated domain-like"/>
    <property type="match status" value="1"/>
</dbReference>
<dbReference type="SUPFAM" id="SSF56194">
    <property type="entry name" value="Uridine diphospho-N-Acetylenolpyruvylglucosamine reductase, MurB, C-terminal domain"/>
    <property type="match status" value="1"/>
</dbReference>
<dbReference type="PROSITE" id="PS51387">
    <property type="entry name" value="FAD_PCMH"/>
    <property type="match status" value="1"/>
</dbReference>
<accession>B1ZGP6</accession>
<protein>
    <recommendedName>
        <fullName evidence="1">UDP-N-acetylenolpyruvoylglucosamine reductase</fullName>
        <ecNumber evidence="1">1.3.1.98</ecNumber>
    </recommendedName>
    <alternativeName>
        <fullName evidence="1">UDP-N-acetylmuramate dehydrogenase</fullName>
    </alternativeName>
</protein>
<sequence length="309" mass="32727">MTAHSLIDDIRAAAPDLRGRLLENQSLSDLTWFRVGGPAQVLFSPADEEDLAAFLAALDPSVPVTVIGLGSNLIVRDGGIPGVTIRLGGKAFGSVEIDGETIRAGTAVPDMRLAKAAAEASLDGLAFFRGIPGSVGGALRMNAGAHGGETTDVLTEARGIDRNGAVRSFTHAEMGFRYRHSSAPDDVIFTSATFRGRPGDREGIEAEMERVTAAREAAQPIRERTGGSTFKNPKGGKAWQLIDAAGCRGLIRGGAQVSEMHCNFLINRGGATAADIEGLGEEVRRRVREHSGFELHWEIKRIGVESSEG</sequence>
<organism>
    <name type="scientific">Methylorubrum populi (strain ATCC BAA-705 / NCIMB 13946 / BJ001)</name>
    <name type="common">Methylobacterium populi</name>
    <dbReference type="NCBI Taxonomy" id="441620"/>
    <lineage>
        <taxon>Bacteria</taxon>
        <taxon>Pseudomonadati</taxon>
        <taxon>Pseudomonadota</taxon>
        <taxon>Alphaproteobacteria</taxon>
        <taxon>Hyphomicrobiales</taxon>
        <taxon>Methylobacteriaceae</taxon>
        <taxon>Methylorubrum</taxon>
    </lineage>
</organism>
<evidence type="ECO:0000255" key="1">
    <source>
        <dbReference type="HAMAP-Rule" id="MF_00037"/>
    </source>
</evidence>
<reference key="1">
    <citation type="submission" date="2008-04" db="EMBL/GenBank/DDBJ databases">
        <title>Complete sequence of chromosome of Methylobacterium populi BJ001.</title>
        <authorList>
            <consortium name="US DOE Joint Genome Institute"/>
            <person name="Copeland A."/>
            <person name="Lucas S."/>
            <person name="Lapidus A."/>
            <person name="Glavina del Rio T."/>
            <person name="Dalin E."/>
            <person name="Tice H."/>
            <person name="Bruce D."/>
            <person name="Goodwin L."/>
            <person name="Pitluck S."/>
            <person name="Chertkov O."/>
            <person name="Brettin T."/>
            <person name="Detter J.C."/>
            <person name="Han C."/>
            <person name="Kuske C.R."/>
            <person name="Schmutz J."/>
            <person name="Larimer F."/>
            <person name="Land M."/>
            <person name="Hauser L."/>
            <person name="Kyrpides N."/>
            <person name="Mikhailova N."/>
            <person name="Marx C."/>
            <person name="Richardson P."/>
        </authorList>
    </citation>
    <scope>NUCLEOTIDE SEQUENCE [LARGE SCALE GENOMIC DNA]</scope>
    <source>
        <strain>ATCC BAA-705 / NCIMB 13946 / BJ001</strain>
    </source>
</reference>